<name>H82_NEIG1</name>
<comment type="subcellular location">
    <subcellularLocation>
        <location>Cell outer membrane</location>
        <topology>Lipid-anchor</topology>
    </subcellularLocation>
</comment>
<proteinExistence type="evidence at protein level"/>
<evidence type="ECO:0000255" key="1">
    <source>
        <dbReference type="PROSITE-ProRule" id="PRU00303"/>
    </source>
</evidence>
<evidence type="ECO:0000256" key="2">
    <source>
        <dbReference type="SAM" id="MobiDB-lite"/>
    </source>
</evidence>
<evidence type="ECO:0000269" key="3">
    <source>
    </source>
</evidence>
<evidence type="ECO:0000305" key="4"/>
<reference key="1">
    <citation type="journal article" date="1989" name="Mol. Microbiol.">
        <title>Conserved lipoprotein H.8 of pathogenic Neisseria consists entirely of pentapeptide repeats.</title>
        <authorList>
            <person name="Woods J.P."/>
            <person name="Spinola S.M."/>
            <person name="Strobel S.M."/>
            <person name="Cannon J.G."/>
        </authorList>
    </citation>
    <scope>NUCLEOTIDE SEQUENCE [GENOMIC DNA]</scope>
    <scope>DIACYLGLYCEROL AT CYS-18</scope>
</reference>
<reference key="2">
    <citation type="submission" date="2003-03" db="EMBL/GenBank/DDBJ databases">
        <title>The complete genome sequence of Neisseria gonorrhoeae.</title>
        <authorList>
            <person name="Lewis L.A."/>
            <person name="Gillaspy A.F."/>
            <person name="McLaughlin R.E."/>
            <person name="Gipson M."/>
            <person name="Ducey T.F."/>
            <person name="Ownbey T."/>
            <person name="Hartman K."/>
            <person name="Nydick C."/>
            <person name="Carson M.B."/>
            <person name="Vaughn J."/>
            <person name="Thomson C."/>
            <person name="Song L."/>
            <person name="Lin S."/>
            <person name="Yuan X."/>
            <person name="Najar F."/>
            <person name="Zhan M."/>
            <person name="Ren Q."/>
            <person name="Zhu H."/>
            <person name="Qi S."/>
            <person name="Kenton S.M."/>
            <person name="Lai H."/>
            <person name="White J.D."/>
            <person name="Clifton S."/>
            <person name="Roe B.A."/>
            <person name="Dyer D.W."/>
        </authorList>
    </citation>
    <scope>NUCLEOTIDE SEQUENCE [LARGE SCALE GENOMIC DNA]</scope>
    <source>
        <strain>ATCC 700825 / FA 1090</strain>
    </source>
</reference>
<gene>
    <name type="ordered locus">NGO_0983</name>
</gene>
<organism>
    <name type="scientific">Neisseria gonorrhoeae (strain ATCC 700825 / FA 1090)</name>
    <dbReference type="NCBI Taxonomy" id="242231"/>
    <lineage>
        <taxon>Bacteria</taxon>
        <taxon>Pseudomonadati</taxon>
        <taxon>Pseudomonadota</taxon>
        <taxon>Betaproteobacteria</taxon>
        <taxon>Neisseriales</taxon>
        <taxon>Neisseriaceae</taxon>
        <taxon>Neisseria</taxon>
    </lineage>
</organism>
<sequence length="88" mass="8023">MKKSLFAAALLSLALAACGGEKAAEAPAAEASSTEAPAAEAPAAEAPAAEAAAAEAPAAEAPAAEAPAAEAAATEAPAAEAPAAEAAK</sequence>
<protein>
    <recommendedName>
        <fullName>Outer membrane protein H.8</fullName>
    </recommendedName>
</protein>
<dbReference type="EMBL" id="X12627">
    <property type="protein sequence ID" value="CAA31145.1"/>
    <property type="molecule type" value="Genomic_DNA"/>
</dbReference>
<dbReference type="EMBL" id="AE004969">
    <property type="protein sequence ID" value="AAW89669.1"/>
    <property type="molecule type" value="Genomic_DNA"/>
</dbReference>
<dbReference type="PIR" id="S02720">
    <property type="entry name" value="S02720"/>
</dbReference>
<dbReference type="RefSeq" id="WP_003688296.1">
    <property type="nucleotide sequence ID" value="NC_002946.2"/>
</dbReference>
<dbReference type="RefSeq" id="YP_208081.1">
    <property type="nucleotide sequence ID" value="NC_002946.2"/>
</dbReference>
<dbReference type="STRING" id="242231.NGO_0983"/>
<dbReference type="KEGG" id="ngo:NGO_0983"/>
<dbReference type="PATRIC" id="fig|242231.10.peg.1152"/>
<dbReference type="HOGENOM" id="CLU_174745_0_0_4"/>
<dbReference type="Proteomes" id="UP000000535">
    <property type="component" value="Chromosome"/>
</dbReference>
<dbReference type="GO" id="GO:0009279">
    <property type="term" value="C:cell outer membrane"/>
    <property type="evidence" value="ECO:0007669"/>
    <property type="project" value="UniProtKB-SubCell"/>
</dbReference>
<dbReference type="PROSITE" id="PS51257">
    <property type="entry name" value="PROKAR_LIPOPROTEIN"/>
    <property type="match status" value="1"/>
</dbReference>
<keyword id="KW-0998">Cell outer membrane</keyword>
<keyword id="KW-0449">Lipoprotein</keyword>
<keyword id="KW-0472">Membrane</keyword>
<keyword id="KW-0564">Palmitate</keyword>
<keyword id="KW-1185">Reference proteome</keyword>
<keyword id="KW-0677">Repeat</keyword>
<keyword id="KW-0732">Signal</keyword>
<accession>P11910</accession>
<accession>Q5F818</accession>
<feature type="signal peptide">
    <location>
        <begin position="1"/>
        <end position="17"/>
    </location>
</feature>
<feature type="chain" id="PRO_0000018024" description="Outer membrane protein H.8">
    <location>
        <begin position="18"/>
        <end position="88"/>
    </location>
</feature>
<feature type="repeat" description="1">
    <location>
        <begin position="23"/>
        <end position="27"/>
    </location>
</feature>
<feature type="repeat" description="2">
    <location>
        <begin position="28"/>
        <end position="32"/>
    </location>
</feature>
<feature type="repeat" description="3">
    <location>
        <begin position="33"/>
        <end position="37"/>
    </location>
</feature>
<feature type="repeat" description="4">
    <location>
        <begin position="38"/>
        <end position="42"/>
    </location>
</feature>
<feature type="repeat" description="5">
    <location>
        <begin position="43"/>
        <end position="47"/>
    </location>
</feature>
<feature type="repeat" description="6">
    <location>
        <begin position="48"/>
        <end position="52"/>
    </location>
</feature>
<feature type="repeat" description="7">
    <location>
        <begin position="53"/>
        <end position="57"/>
    </location>
</feature>
<feature type="repeat" description="8">
    <location>
        <begin position="58"/>
        <end position="62"/>
    </location>
</feature>
<feature type="repeat" description="9">
    <location>
        <begin position="63"/>
        <end position="67"/>
    </location>
</feature>
<feature type="repeat" description="10">
    <location>
        <begin position="68"/>
        <end position="72"/>
    </location>
</feature>
<feature type="repeat" description="11">
    <location>
        <begin position="73"/>
        <end position="77"/>
    </location>
</feature>
<feature type="repeat" description="12">
    <location>
        <begin position="78"/>
        <end position="82"/>
    </location>
</feature>
<feature type="repeat" description="13">
    <location>
        <begin position="83"/>
        <end position="87"/>
    </location>
</feature>
<feature type="region of interest" description="Disordered" evidence="2">
    <location>
        <begin position="23"/>
        <end position="88"/>
    </location>
</feature>
<feature type="region of interest" description="13 X 5 AA tandem repeats of [AS]-[AT]-E-A-[PAS]">
    <location>
        <begin position="23"/>
        <end position="87"/>
    </location>
</feature>
<feature type="compositionally biased region" description="Low complexity" evidence="2">
    <location>
        <begin position="25"/>
        <end position="88"/>
    </location>
</feature>
<feature type="lipid moiety-binding region" description="N-palmitoyl cysteine" evidence="4">
    <location>
        <position position="18"/>
    </location>
</feature>
<feature type="lipid moiety-binding region" description="S-diacylglycerol cysteine" evidence="1 3">
    <location>
        <position position="18"/>
    </location>
</feature>